<feature type="chain" id="PRO_0000092953" description="Phosphate import ATP-binding protein PstB">
    <location>
        <begin position="1"/>
        <end position="257"/>
    </location>
</feature>
<feature type="domain" description="ABC transporter" evidence="1">
    <location>
        <begin position="11"/>
        <end position="252"/>
    </location>
</feature>
<feature type="binding site" evidence="1">
    <location>
        <begin position="43"/>
        <end position="50"/>
    </location>
    <ligand>
        <name>ATP</name>
        <dbReference type="ChEBI" id="CHEBI:30616"/>
    </ligand>
</feature>
<sequence>MEAGKSAEDVFNISRLYLYINDKAILKDITIKIPNNSIFGIMGPSGSGKSTLLKVLNRLIEIYDSKIKVDGKVLYFGKDIFQIDAIKLRKEVGMVFQQPNPFPHLSIYDNIAYPLKSHGIKEKREIKKIVEECLRKVGLWKEVYDRLNSPASQLSGGQQQRLTIARALALKPKVLLMDEPTSMIDIVNSQAIEKLITELKNEIAIVIVSHNPQQVARVADYVAFLYNGELVEWGSSNEIFTSPKNELTEKYVIGRIS</sequence>
<accession>Q97ZT9</accession>
<protein>
    <recommendedName>
        <fullName evidence="1">Phosphate import ATP-binding protein PstB</fullName>
        <ecNumber evidence="1">7.3.2.1</ecNumber>
    </recommendedName>
    <alternativeName>
        <fullName evidence="1">ABC phosphate transporter</fullName>
    </alternativeName>
    <alternativeName>
        <fullName evidence="1">Phosphate-transporting ATPase</fullName>
    </alternativeName>
</protein>
<reference key="1">
    <citation type="journal article" date="2001" name="Proc. Natl. Acad. Sci. U.S.A.">
        <title>The complete genome of the crenarchaeon Sulfolobus solfataricus P2.</title>
        <authorList>
            <person name="She Q."/>
            <person name="Singh R.K."/>
            <person name="Confalonieri F."/>
            <person name="Zivanovic Y."/>
            <person name="Allard G."/>
            <person name="Awayez M.J."/>
            <person name="Chan-Weiher C.C.-Y."/>
            <person name="Clausen I.G."/>
            <person name="Curtis B.A."/>
            <person name="De Moors A."/>
            <person name="Erauso G."/>
            <person name="Fletcher C."/>
            <person name="Gordon P.M.K."/>
            <person name="Heikamp-de Jong I."/>
            <person name="Jeffries A.C."/>
            <person name="Kozera C.J."/>
            <person name="Medina N."/>
            <person name="Peng X."/>
            <person name="Thi-Ngoc H.P."/>
            <person name="Redder P."/>
            <person name="Schenk M.E."/>
            <person name="Theriault C."/>
            <person name="Tolstrup N."/>
            <person name="Charlebois R.L."/>
            <person name="Doolittle W.F."/>
            <person name="Duguet M."/>
            <person name="Gaasterland T."/>
            <person name="Garrett R.A."/>
            <person name="Ragan M.A."/>
            <person name="Sensen C.W."/>
            <person name="Van der Oost J."/>
        </authorList>
    </citation>
    <scope>NUCLEOTIDE SEQUENCE [LARGE SCALE GENOMIC DNA]</scope>
    <source>
        <strain>ATCC 35092 / DSM 1617 / JCM 11322 / P2</strain>
    </source>
</reference>
<gene>
    <name evidence="1" type="primary">pstB</name>
    <name type="ordered locus">SSO0488</name>
</gene>
<keyword id="KW-0067">ATP-binding</keyword>
<keyword id="KW-1003">Cell membrane</keyword>
<keyword id="KW-0472">Membrane</keyword>
<keyword id="KW-0547">Nucleotide-binding</keyword>
<keyword id="KW-0592">Phosphate transport</keyword>
<keyword id="KW-1185">Reference proteome</keyword>
<keyword id="KW-1278">Translocase</keyword>
<keyword id="KW-0813">Transport</keyword>
<proteinExistence type="inferred from homology"/>
<name>PSTB_SACS2</name>
<evidence type="ECO:0000255" key="1">
    <source>
        <dbReference type="HAMAP-Rule" id="MF_01702"/>
    </source>
</evidence>
<dbReference type="EC" id="7.3.2.1" evidence="1"/>
<dbReference type="EMBL" id="AE006641">
    <property type="protein sequence ID" value="AAK40809.1"/>
    <property type="molecule type" value="Genomic_DNA"/>
</dbReference>
<dbReference type="PIR" id="B90194">
    <property type="entry name" value="B90194"/>
</dbReference>
<dbReference type="RefSeq" id="WP_010923003.1">
    <property type="nucleotide sequence ID" value="NC_002754.1"/>
</dbReference>
<dbReference type="SMR" id="Q97ZT9"/>
<dbReference type="FunCoup" id="Q97ZT9">
    <property type="interactions" value="54"/>
</dbReference>
<dbReference type="STRING" id="273057.SSO0488"/>
<dbReference type="PaxDb" id="273057-SSO0488"/>
<dbReference type="EnsemblBacteria" id="AAK40809">
    <property type="protein sequence ID" value="AAK40809"/>
    <property type="gene ID" value="SSO0488"/>
</dbReference>
<dbReference type="GeneID" id="7807109"/>
<dbReference type="KEGG" id="sso:SSO0488"/>
<dbReference type="PATRIC" id="fig|273057.12.peg.482"/>
<dbReference type="eggNOG" id="arCOG00231">
    <property type="taxonomic scope" value="Archaea"/>
</dbReference>
<dbReference type="HOGENOM" id="CLU_000604_1_22_2"/>
<dbReference type="InParanoid" id="Q97ZT9"/>
<dbReference type="PhylomeDB" id="Q97ZT9"/>
<dbReference type="Proteomes" id="UP000001974">
    <property type="component" value="Chromosome"/>
</dbReference>
<dbReference type="GO" id="GO:0005886">
    <property type="term" value="C:plasma membrane"/>
    <property type="evidence" value="ECO:0007669"/>
    <property type="project" value="UniProtKB-SubCell"/>
</dbReference>
<dbReference type="GO" id="GO:0005524">
    <property type="term" value="F:ATP binding"/>
    <property type="evidence" value="ECO:0007669"/>
    <property type="project" value="UniProtKB-KW"/>
</dbReference>
<dbReference type="GO" id="GO:0016887">
    <property type="term" value="F:ATP hydrolysis activity"/>
    <property type="evidence" value="ECO:0007669"/>
    <property type="project" value="InterPro"/>
</dbReference>
<dbReference type="GO" id="GO:0015415">
    <property type="term" value="F:ATPase-coupled phosphate ion transmembrane transporter activity"/>
    <property type="evidence" value="ECO:0007669"/>
    <property type="project" value="UniProtKB-EC"/>
</dbReference>
<dbReference type="GO" id="GO:0035435">
    <property type="term" value="P:phosphate ion transmembrane transport"/>
    <property type="evidence" value="ECO:0007669"/>
    <property type="project" value="InterPro"/>
</dbReference>
<dbReference type="CDD" id="cd03260">
    <property type="entry name" value="ABC_PstB_phosphate_transporter"/>
    <property type="match status" value="1"/>
</dbReference>
<dbReference type="Gene3D" id="3.40.50.300">
    <property type="entry name" value="P-loop containing nucleotide triphosphate hydrolases"/>
    <property type="match status" value="1"/>
</dbReference>
<dbReference type="InterPro" id="IPR003593">
    <property type="entry name" value="AAA+_ATPase"/>
</dbReference>
<dbReference type="InterPro" id="IPR003439">
    <property type="entry name" value="ABC_transporter-like_ATP-bd"/>
</dbReference>
<dbReference type="InterPro" id="IPR017871">
    <property type="entry name" value="ABC_transporter-like_CS"/>
</dbReference>
<dbReference type="InterPro" id="IPR027417">
    <property type="entry name" value="P-loop_NTPase"/>
</dbReference>
<dbReference type="InterPro" id="IPR005670">
    <property type="entry name" value="PstB-like"/>
</dbReference>
<dbReference type="NCBIfam" id="NF010840">
    <property type="entry name" value="PRK14246.1"/>
    <property type="match status" value="1"/>
</dbReference>
<dbReference type="PANTHER" id="PTHR43423">
    <property type="entry name" value="ABC TRANSPORTER I FAMILY MEMBER 17"/>
    <property type="match status" value="1"/>
</dbReference>
<dbReference type="PANTHER" id="PTHR43423:SF1">
    <property type="entry name" value="ABC TRANSPORTER I FAMILY MEMBER 17"/>
    <property type="match status" value="1"/>
</dbReference>
<dbReference type="Pfam" id="PF00005">
    <property type="entry name" value="ABC_tran"/>
    <property type="match status" value="1"/>
</dbReference>
<dbReference type="SMART" id="SM00382">
    <property type="entry name" value="AAA"/>
    <property type="match status" value="1"/>
</dbReference>
<dbReference type="SUPFAM" id="SSF52540">
    <property type="entry name" value="P-loop containing nucleoside triphosphate hydrolases"/>
    <property type="match status" value="1"/>
</dbReference>
<dbReference type="PROSITE" id="PS00211">
    <property type="entry name" value="ABC_TRANSPORTER_1"/>
    <property type="match status" value="1"/>
</dbReference>
<dbReference type="PROSITE" id="PS50893">
    <property type="entry name" value="ABC_TRANSPORTER_2"/>
    <property type="match status" value="1"/>
</dbReference>
<dbReference type="PROSITE" id="PS51238">
    <property type="entry name" value="PSTB"/>
    <property type="match status" value="1"/>
</dbReference>
<comment type="function">
    <text evidence="1">Part of the ABC transporter complex PstSACB involved in phosphate import. Responsible for energy coupling to the transport system.</text>
</comment>
<comment type="catalytic activity">
    <reaction evidence="1">
        <text>phosphate(out) + ATP + H2O = ADP + 2 phosphate(in) + H(+)</text>
        <dbReference type="Rhea" id="RHEA:24440"/>
        <dbReference type="ChEBI" id="CHEBI:15377"/>
        <dbReference type="ChEBI" id="CHEBI:15378"/>
        <dbReference type="ChEBI" id="CHEBI:30616"/>
        <dbReference type="ChEBI" id="CHEBI:43474"/>
        <dbReference type="ChEBI" id="CHEBI:456216"/>
        <dbReference type="EC" id="7.3.2.1"/>
    </reaction>
</comment>
<comment type="subunit">
    <text evidence="1">The complex is composed of two ATP-binding proteins (PstB), two transmembrane proteins (PstC and PstA) and a solute-binding protein (PstS).</text>
</comment>
<comment type="subcellular location">
    <subcellularLocation>
        <location evidence="1">Cell membrane</location>
        <topology evidence="1">Peripheral membrane protein</topology>
    </subcellularLocation>
</comment>
<comment type="similarity">
    <text evidence="1">Belongs to the ABC transporter superfamily. Phosphate importer (TC 3.A.1.7) family.</text>
</comment>
<organism>
    <name type="scientific">Saccharolobus solfataricus (strain ATCC 35092 / DSM 1617 / JCM 11322 / P2)</name>
    <name type="common">Sulfolobus solfataricus</name>
    <dbReference type="NCBI Taxonomy" id="273057"/>
    <lineage>
        <taxon>Archaea</taxon>
        <taxon>Thermoproteota</taxon>
        <taxon>Thermoprotei</taxon>
        <taxon>Sulfolobales</taxon>
        <taxon>Sulfolobaceae</taxon>
        <taxon>Saccharolobus</taxon>
    </lineage>
</organism>